<accession>A0LTH9</accession>
<organism>
    <name type="scientific">Acidothermus cellulolyticus (strain ATCC 43068 / DSM 8971 / 11B)</name>
    <dbReference type="NCBI Taxonomy" id="351607"/>
    <lineage>
        <taxon>Bacteria</taxon>
        <taxon>Bacillati</taxon>
        <taxon>Actinomycetota</taxon>
        <taxon>Actinomycetes</taxon>
        <taxon>Acidothermales</taxon>
        <taxon>Acidothermaceae</taxon>
        <taxon>Acidothermus</taxon>
    </lineage>
</organism>
<name>TRPD_ACIC1</name>
<evidence type="ECO:0000255" key="1">
    <source>
        <dbReference type="HAMAP-Rule" id="MF_00211"/>
    </source>
</evidence>
<proteinExistence type="inferred from homology"/>
<comment type="function">
    <text evidence="1">Catalyzes the transfer of the phosphoribosyl group of 5-phosphorylribose-1-pyrophosphate (PRPP) to anthranilate to yield N-(5'-phosphoribosyl)-anthranilate (PRA).</text>
</comment>
<comment type="catalytic activity">
    <reaction evidence="1">
        <text>N-(5-phospho-beta-D-ribosyl)anthranilate + diphosphate = 5-phospho-alpha-D-ribose 1-diphosphate + anthranilate</text>
        <dbReference type="Rhea" id="RHEA:11768"/>
        <dbReference type="ChEBI" id="CHEBI:16567"/>
        <dbReference type="ChEBI" id="CHEBI:18277"/>
        <dbReference type="ChEBI" id="CHEBI:33019"/>
        <dbReference type="ChEBI" id="CHEBI:58017"/>
        <dbReference type="EC" id="2.4.2.18"/>
    </reaction>
</comment>
<comment type="cofactor">
    <cofactor evidence="1">
        <name>Mg(2+)</name>
        <dbReference type="ChEBI" id="CHEBI:18420"/>
    </cofactor>
    <text evidence="1">Binds 2 magnesium ions per monomer.</text>
</comment>
<comment type="pathway">
    <text evidence="1">Amino-acid biosynthesis; L-tryptophan biosynthesis; L-tryptophan from chorismate: step 2/5.</text>
</comment>
<comment type="subunit">
    <text evidence="1">Homodimer.</text>
</comment>
<comment type="similarity">
    <text evidence="1">Belongs to the anthranilate phosphoribosyltransferase family.</text>
</comment>
<reference key="1">
    <citation type="journal article" date="2009" name="Genome Res.">
        <title>Complete genome of the cellulolytic thermophile Acidothermus cellulolyticus 11B provides insights into its ecophysiological and evolutionary adaptations.</title>
        <authorList>
            <person name="Barabote R.D."/>
            <person name="Xie G."/>
            <person name="Leu D.H."/>
            <person name="Normand P."/>
            <person name="Necsulea A."/>
            <person name="Daubin V."/>
            <person name="Medigue C."/>
            <person name="Adney W.S."/>
            <person name="Xu X.C."/>
            <person name="Lapidus A."/>
            <person name="Parales R.E."/>
            <person name="Detter C."/>
            <person name="Pujic P."/>
            <person name="Bruce D."/>
            <person name="Lavire C."/>
            <person name="Challacombe J.F."/>
            <person name="Brettin T.S."/>
            <person name="Berry A.M."/>
        </authorList>
    </citation>
    <scope>NUCLEOTIDE SEQUENCE [LARGE SCALE GENOMIC DNA]</scope>
    <source>
        <strain>ATCC 43068 / DSM 8971 / 11B</strain>
    </source>
</reference>
<gene>
    <name evidence="1" type="primary">trpD</name>
    <name type="ordered locus">Acel_0966</name>
</gene>
<feature type="chain" id="PRO_0000325409" description="Anthranilate phosphoribosyltransferase">
    <location>
        <begin position="1"/>
        <end position="355"/>
    </location>
</feature>
<feature type="binding site" evidence="1">
    <location>
        <position position="85"/>
    </location>
    <ligand>
        <name>5-phospho-alpha-D-ribose 1-diphosphate</name>
        <dbReference type="ChEBI" id="CHEBI:58017"/>
    </ligand>
</feature>
<feature type="binding site" evidence="1">
    <location>
        <position position="85"/>
    </location>
    <ligand>
        <name>anthranilate</name>
        <dbReference type="ChEBI" id="CHEBI:16567"/>
        <label>1</label>
    </ligand>
</feature>
<feature type="binding site" evidence="1">
    <location>
        <begin position="88"/>
        <end position="89"/>
    </location>
    <ligand>
        <name>5-phospho-alpha-D-ribose 1-diphosphate</name>
        <dbReference type="ChEBI" id="CHEBI:58017"/>
    </ligand>
</feature>
<feature type="binding site" evidence="1">
    <location>
        <position position="93"/>
    </location>
    <ligand>
        <name>5-phospho-alpha-D-ribose 1-diphosphate</name>
        <dbReference type="ChEBI" id="CHEBI:58017"/>
    </ligand>
</feature>
<feature type="binding site" evidence="1">
    <location>
        <begin position="95"/>
        <end position="98"/>
    </location>
    <ligand>
        <name>5-phospho-alpha-D-ribose 1-diphosphate</name>
        <dbReference type="ChEBI" id="CHEBI:58017"/>
    </ligand>
</feature>
<feature type="binding site" evidence="1">
    <location>
        <position position="97"/>
    </location>
    <ligand>
        <name>Mg(2+)</name>
        <dbReference type="ChEBI" id="CHEBI:18420"/>
        <label>1</label>
    </ligand>
</feature>
<feature type="binding site" evidence="1">
    <location>
        <begin position="113"/>
        <end position="121"/>
    </location>
    <ligand>
        <name>5-phospho-alpha-D-ribose 1-diphosphate</name>
        <dbReference type="ChEBI" id="CHEBI:58017"/>
    </ligand>
</feature>
<feature type="binding site" evidence="1">
    <location>
        <position position="116"/>
    </location>
    <ligand>
        <name>anthranilate</name>
        <dbReference type="ChEBI" id="CHEBI:16567"/>
        <label>1</label>
    </ligand>
</feature>
<feature type="binding site" evidence="1">
    <location>
        <position position="125"/>
    </location>
    <ligand>
        <name>5-phospho-alpha-D-ribose 1-diphosphate</name>
        <dbReference type="ChEBI" id="CHEBI:58017"/>
    </ligand>
</feature>
<feature type="binding site" evidence="1">
    <location>
        <position position="171"/>
    </location>
    <ligand>
        <name>anthranilate</name>
        <dbReference type="ChEBI" id="CHEBI:16567"/>
        <label>2</label>
    </ligand>
</feature>
<feature type="binding site" evidence="1">
    <location>
        <position position="229"/>
    </location>
    <ligand>
        <name>Mg(2+)</name>
        <dbReference type="ChEBI" id="CHEBI:18420"/>
        <label>2</label>
    </ligand>
</feature>
<feature type="binding site" evidence="1">
    <location>
        <position position="230"/>
    </location>
    <ligand>
        <name>Mg(2+)</name>
        <dbReference type="ChEBI" id="CHEBI:18420"/>
        <label>1</label>
    </ligand>
</feature>
<feature type="binding site" evidence="1">
    <location>
        <position position="230"/>
    </location>
    <ligand>
        <name>Mg(2+)</name>
        <dbReference type="ChEBI" id="CHEBI:18420"/>
        <label>2</label>
    </ligand>
</feature>
<sequence length="355" mass="36299">MTADTPSWPEVLSALLARRDLTEAEAAWAMHQIMSGEATDAQIAAFAVALRAKGESAEEVSGLSSVMLALAAPVPPIGEALDIVGSGGDRAHTVNISTMAAIVAAATGVVVAKHGNRAASSACGSADLLEALGVAIDLDGAGVARCIERAGIGFCFAPVFHPSLRYAAVARREIGIPTVFNFLGPLTNPARPTASAVGVADPRMAPVVAGVLARRGMRALVFRGDDGLDELTVTTTSTVWVVRDGSVQEVAFDPRAVGIEPADTAALRGADARHNAAVARAVLSGERGPIRDAVLLNAAAGLTAFDTPRPDQLVDQISAAMTRCAAAIDTGKAAQLLDAWVEASQAARGVDADRS</sequence>
<dbReference type="EC" id="2.4.2.18" evidence="1"/>
<dbReference type="EMBL" id="CP000481">
    <property type="protein sequence ID" value="ABK52739.1"/>
    <property type="molecule type" value="Genomic_DNA"/>
</dbReference>
<dbReference type="RefSeq" id="WP_011719802.1">
    <property type="nucleotide sequence ID" value="NC_008578.1"/>
</dbReference>
<dbReference type="SMR" id="A0LTH9"/>
<dbReference type="FunCoup" id="A0LTH9">
    <property type="interactions" value="254"/>
</dbReference>
<dbReference type="STRING" id="351607.Acel_0966"/>
<dbReference type="KEGG" id="ace:Acel_0966"/>
<dbReference type="eggNOG" id="COG0547">
    <property type="taxonomic scope" value="Bacteria"/>
</dbReference>
<dbReference type="HOGENOM" id="CLU_034315_4_1_11"/>
<dbReference type="InParanoid" id="A0LTH9"/>
<dbReference type="OrthoDB" id="9806430at2"/>
<dbReference type="UniPathway" id="UPA00035">
    <property type="reaction ID" value="UER00041"/>
</dbReference>
<dbReference type="Proteomes" id="UP000008221">
    <property type="component" value="Chromosome"/>
</dbReference>
<dbReference type="GO" id="GO:0005829">
    <property type="term" value="C:cytosol"/>
    <property type="evidence" value="ECO:0007669"/>
    <property type="project" value="TreeGrafter"/>
</dbReference>
<dbReference type="GO" id="GO:0004048">
    <property type="term" value="F:anthranilate phosphoribosyltransferase activity"/>
    <property type="evidence" value="ECO:0007669"/>
    <property type="project" value="UniProtKB-UniRule"/>
</dbReference>
<dbReference type="GO" id="GO:0000287">
    <property type="term" value="F:magnesium ion binding"/>
    <property type="evidence" value="ECO:0007669"/>
    <property type="project" value="UniProtKB-UniRule"/>
</dbReference>
<dbReference type="GO" id="GO:0000162">
    <property type="term" value="P:L-tryptophan biosynthetic process"/>
    <property type="evidence" value="ECO:0007669"/>
    <property type="project" value="UniProtKB-UniRule"/>
</dbReference>
<dbReference type="FunFam" id="1.20.970.10:FF:000006">
    <property type="entry name" value="Anthranilate phosphoribosyltransferase"/>
    <property type="match status" value="1"/>
</dbReference>
<dbReference type="FunFam" id="3.40.1030.10:FF:000002">
    <property type="entry name" value="Anthranilate phosphoribosyltransferase"/>
    <property type="match status" value="1"/>
</dbReference>
<dbReference type="Gene3D" id="3.40.1030.10">
    <property type="entry name" value="Nucleoside phosphorylase/phosphoribosyltransferase catalytic domain"/>
    <property type="match status" value="1"/>
</dbReference>
<dbReference type="Gene3D" id="1.20.970.10">
    <property type="entry name" value="Transferase, Pyrimidine Nucleoside Phosphorylase, Chain C"/>
    <property type="match status" value="1"/>
</dbReference>
<dbReference type="HAMAP" id="MF_00211">
    <property type="entry name" value="TrpD"/>
    <property type="match status" value="1"/>
</dbReference>
<dbReference type="InterPro" id="IPR005940">
    <property type="entry name" value="Anthranilate_Pribosyl_Tfrase"/>
</dbReference>
<dbReference type="InterPro" id="IPR000312">
    <property type="entry name" value="Glycosyl_Trfase_fam3"/>
</dbReference>
<dbReference type="InterPro" id="IPR017459">
    <property type="entry name" value="Glycosyl_Trfase_fam3_N_dom"/>
</dbReference>
<dbReference type="InterPro" id="IPR036320">
    <property type="entry name" value="Glycosyl_Trfase_fam3_N_dom_sf"/>
</dbReference>
<dbReference type="InterPro" id="IPR035902">
    <property type="entry name" value="Nuc_phospho_transferase"/>
</dbReference>
<dbReference type="NCBIfam" id="TIGR01245">
    <property type="entry name" value="trpD"/>
    <property type="match status" value="1"/>
</dbReference>
<dbReference type="PANTHER" id="PTHR43285">
    <property type="entry name" value="ANTHRANILATE PHOSPHORIBOSYLTRANSFERASE"/>
    <property type="match status" value="1"/>
</dbReference>
<dbReference type="PANTHER" id="PTHR43285:SF2">
    <property type="entry name" value="ANTHRANILATE PHOSPHORIBOSYLTRANSFERASE"/>
    <property type="match status" value="1"/>
</dbReference>
<dbReference type="Pfam" id="PF02885">
    <property type="entry name" value="Glycos_trans_3N"/>
    <property type="match status" value="1"/>
</dbReference>
<dbReference type="Pfam" id="PF00591">
    <property type="entry name" value="Glycos_transf_3"/>
    <property type="match status" value="1"/>
</dbReference>
<dbReference type="SUPFAM" id="SSF52418">
    <property type="entry name" value="Nucleoside phosphorylase/phosphoribosyltransferase catalytic domain"/>
    <property type="match status" value="1"/>
</dbReference>
<dbReference type="SUPFAM" id="SSF47648">
    <property type="entry name" value="Nucleoside phosphorylase/phosphoribosyltransferase N-terminal domain"/>
    <property type="match status" value="1"/>
</dbReference>
<protein>
    <recommendedName>
        <fullName evidence="1">Anthranilate phosphoribosyltransferase</fullName>
        <ecNumber evidence="1">2.4.2.18</ecNumber>
    </recommendedName>
</protein>
<keyword id="KW-0028">Amino-acid biosynthesis</keyword>
<keyword id="KW-0057">Aromatic amino acid biosynthesis</keyword>
<keyword id="KW-0328">Glycosyltransferase</keyword>
<keyword id="KW-0460">Magnesium</keyword>
<keyword id="KW-0479">Metal-binding</keyword>
<keyword id="KW-1185">Reference proteome</keyword>
<keyword id="KW-0808">Transferase</keyword>
<keyword id="KW-0822">Tryptophan biosynthesis</keyword>